<gene>
    <name type="primary">sopE</name>
</gene>
<protein>
    <recommendedName>
        <fullName>Guanine nucleotide exchange factor SopE</fullName>
    </recommendedName>
    <alternativeName>
        <fullName>Effector protein SopE</fullName>
    </alternativeName>
    <alternativeName>
        <fullName>Toxin SopE</fullName>
    </alternativeName>
</protein>
<evidence type="ECO:0000250" key="1"/>
<evidence type="ECO:0000305" key="2"/>
<feature type="initiator methionine" description="Removed" evidence="1">
    <location>
        <position position="1"/>
    </location>
</feature>
<feature type="chain" id="PRO_0000220735" description="Guanine nucleotide exchange factor SopE">
    <location>
        <begin position="2"/>
        <end position="240"/>
    </location>
</feature>
<feature type="region of interest" description="GEF catalytic domain" evidence="1">
    <location>
        <begin position="78"/>
        <end position="240"/>
    </location>
</feature>
<organism>
    <name type="scientific">Salmonella gallinarum</name>
    <dbReference type="NCBI Taxonomy" id="594"/>
    <lineage>
        <taxon>Bacteria</taxon>
        <taxon>Pseudomonadati</taxon>
        <taxon>Pseudomonadota</taxon>
        <taxon>Gammaproteobacteria</taxon>
        <taxon>Enterobacterales</taxon>
        <taxon>Enterobacteriaceae</taxon>
        <taxon>Salmonella</taxon>
    </lineage>
</organism>
<comment type="function">
    <text evidence="1">Activator for both CDC42 and RAC1 by directly engaging these Rho GTPases and acting as potent guanine nucleotide exchange factor (GEF). This activation results in actin cytoskeleton rearrangements and stimulates membrane ruffling, promoting bacterial entry into non-phagocytic cells (By similarity).</text>
</comment>
<comment type="subcellular location">
    <subcellularLocation>
        <location evidence="1">Secreted</location>
    </subcellularLocation>
    <text evidence="1">Secreted via the type III secretion system 1 (SPI-1 T3SS).</text>
</comment>
<comment type="miscellaneous">
    <text>Encoded within a lambda-like prophage region with similarity to GIFSY phages.</text>
</comment>
<comment type="similarity">
    <text evidence="2">Belongs to the GEF (guanine exchange factor) SopE family.</text>
</comment>
<dbReference type="EMBL" id="AF380340">
    <property type="protein sequence ID" value="AAL67197.1"/>
    <property type="molecule type" value="Genomic_DNA"/>
</dbReference>
<dbReference type="RefSeq" id="WP_000161702.1">
    <property type="nucleotide sequence ID" value="NZ_RHEL01000001.1"/>
</dbReference>
<dbReference type="SMR" id="Q8VSQ6"/>
<dbReference type="PATRIC" id="fig|594.9.peg.2805"/>
<dbReference type="OMA" id="YATIYSE"/>
<dbReference type="GO" id="GO:0005576">
    <property type="term" value="C:extracellular region"/>
    <property type="evidence" value="ECO:0007669"/>
    <property type="project" value="UniProtKB-SubCell"/>
</dbReference>
<dbReference type="GO" id="GO:0005096">
    <property type="term" value="F:GTPase activator activity"/>
    <property type="evidence" value="ECO:0007669"/>
    <property type="project" value="UniProtKB-KW"/>
</dbReference>
<dbReference type="GO" id="GO:0005085">
    <property type="term" value="F:guanyl-nucleotide exchange factor activity"/>
    <property type="evidence" value="ECO:0007669"/>
    <property type="project" value="UniProtKB-KW"/>
</dbReference>
<dbReference type="GO" id="GO:0030036">
    <property type="term" value="P:actin cytoskeleton organization"/>
    <property type="evidence" value="ECO:0007669"/>
    <property type="project" value="InterPro"/>
</dbReference>
<dbReference type="Gene3D" id="1.10.4120.10">
    <property type="entry name" value="SopE-like, GEF domain"/>
    <property type="match status" value="1"/>
</dbReference>
<dbReference type="InterPro" id="IPR005414">
    <property type="entry name" value="SopE"/>
</dbReference>
<dbReference type="InterPro" id="IPR035949">
    <property type="entry name" value="SopE-like_GEF_dom_sf"/>
</dbReference>
<dbReference type="InterPro" id="IPR016019">
    <property type="entry name" value="SopE_GEF_dom"/>
</dbReference>
<dbReference type="InterPro" id="IPR016018">
    <property type="entry name" value="SopE_N_dom"/>
</dbReference>
<dbReference type="NCBIfam" id="NF011809">
    <property type="entry name" value="PRK15279.1"/>
    <property type="match status" value="1"/>
</dbReference>
<dbReference type="NCBIfam" id="NF011810">
    <property type="entry name" value="PRK15280.1"/>
    <property type="match status" value="1"/>
</dbReference>
<dbReference type="Pfam" id="PF05364">
    <property type="entry name" value="SecIII_SopE_N"/>
    <property type="match status" value="1"/>
</dbReference>
<dbReference type="Pfam" id="PF07487">
    <property type="entry name" value="SopE_GEF"/>
    <property type="match status" value="1"/>
</dbReference>
<dbReference type="PIRSF" id="PIRSF034781">
    <property type="entry name" value="SecIII_sopE"/>
    <property type="match status" value="1"/>
</dbReference>
<dbReference type="PRINTS" id="PR01593">
    <property type="entry name" value="SOPEPROTEIN"/>
</dbReference>
<dbReference type="SUPFAM" id="SSF81832">
    <property type="entry name" value="SopE-like GEF domain"/>
    <property type="match status" value="1"/>
</dbReference>
<proteinExistence type="inferred from homology"/>
<keyword id="KW-0343">GTPase activation</keyword>
<keyword id="KW-0344">Guanine-nucleotide releasing factor</keyword>
<keyword id="KW-0964">Secreted</keyword>
<keyword id="KW-0843">Virulence</keyword>
<accession>Q8VSQ6</accession>
<name>SOPE_SALGL</name>
<sequence length="240" mass="26751">MTKITLFPHNFRIQKQETTPLKEKSTEKNSLAKSILAVKNHFIKLNSKLSERFISHKNTESSATHFHRGSASEGRAVLTNKVVKNFMLQTLHDIDIRGSASKDPAYASQTREAILSAVYSKYKDQYCNLLISKGIDIAPFLKEIGEAAQNAGLPGATKNDVFTPSGAGANPFITPLITSAYSKYPHMFTSQHQKASFNIYAEKIIMTEVVPLFNECAMPTPQQFQQILENIANKYIPNTP</sequence>
<reference key="1">
    <citation type="journal article" date="2001" name="J. Mol. Biol.">
        <title>Transfer of the Salmonella type III effector sopE between unrelated phage families.</title>
        <authorList>
            <person name="Mirold S."/>
            <person name="Rabsch W."/>
            <person name="Tschaepe H."/>
            <person name="Hardt W.-D."/>
        </authorList>
    </citation>
    <scope>NUCLEOTIDE SEQUENCE [GENOMIC DNA]</scope>
    <scope>PROPHAGE-RELATED REGION</scope>
    <source>
        <strain>X3796</strain>
    </source>
</reference>